<keyword id="KW-0963">Cytoplasm</keyword>
<keyword id="KW-0456">Lyase</keyword>
<keyword id="KW-0704">Schiff base</keyword>
<gene>
    <name evidence="1" type="primary">deoC</name>
    <name type="ordered locus">BCAH820_1927</name>
</gene>
<dbReference type="EC" id="4.1.2.4" evidence="1"/>
<dbReference type="EMBL" id="CP001283">
    <property type="protein sequence ID" value="ACK87218.1"/>
    <property type="molecule type" value="Genomic_DNA"/>
</dbReference>
<dbReference type="RefSeq" id="WP_001017446.1">
    <property type="nucleotide sequence ID" value="NC_011773.1"/>
</dbReference>
<dbReference type="SMR" id="B7JJK4"/>
<dbReference type="GeneID" id="45021821"/>
<dbReference type="KEGG" id="bcu:BCAH820_1927"/>
<dbReference type="HOGENOM" id="CLU_053595_0_1_9"/>
<dbReference type="UniPathway" id="UPA00002">
    <property type="reaction ID" value="UER00468"/>
</dbReference>
<dbReference type="Proteomes" id="UP000001363">
    <property type="component" value="Chromosome"/>
</dbReference>
<dbReference type="GO" id="GO:0005737">
    <property type="term" value="C:cytoplasm"/>
    <property type="evidence" value="ECO:0007669"/>
    <property type="project" value="UniProtKB-SubCell"/>
</dbReference>
<dbReference type="GO" id="GO:0004139">
    <property type="term" value="F:deoxyribose-phosphate aldolase activity"/>
    <property type="evidence" value="ECO:0007669"/>
    <property type="project" value="UniProtKB-UniRule"/>
</dbReference>
<dbReference type="GO" id="GO:0006018">
    <property type="term" value="P:2-deoxyribose 1-phosphate catabolic process"/>
    <property type="evidence" value="ECO:0007669"/>
    <property type="project" value="UniProtKB-UniRule"/>
</dbReference>
<dbReference type="GO" id="GO:0016052">
    <property type="term" value="P:carbohydrate catabolic process"/>
    <property type="evidence" value="ECO:0007669"/>
    <property type="project" value="TreeGrafter"/>
</dbReference>
<dbReference type="GO" id="GO:0009264">
    <property type="term" value="P:deoxyribonucleotide catabolic process"/>
    <property type="evidence" value="ECO:0007669"/>
    <property type="project" value="InterPro"/>
</dbReference>
<dbReference type="CDD" id="cd00959">
    <property type="entry name" value="DeoC"/>
    <property type="match status" value="1"/>
</dbReference>
<dbReference type="FunFam" id="3.20.20.70:FF:000044">
    <property type="entry name" value="Deoxyribose-phosphate aldolase"/>
    <property type="match status" value="1"/>
</dbReference>
<dbReference type="Gene3D" id="3.20.20.70">
    <property type="entry name" value="Aldolase class I"/>
    <property type="match status" value="1"/>
</dbReference>
<dbReference type="HAMAP" id="MF_00114">
    <property type="entry name" value="DeoC_type1"/>
    <property type="match status" value="1"/>
</dbReference>
<dbReference type="InterPro" id="IPR013785">
    <property type="entry name" value="Aldolase_TIM"/>
</dbReference>
<dbReference type="InterPro" id="IPR011343">
    <property type="entry name" value="DeoC"/>
</dbReference>
<dbReference type="InterPro" id="IPR002915">
    <property type="entry name" value="DeoC/FbaB/LacD_aldolase"/>
</dbReference>
<dbReference type="InterPro" id="IPR028581">
    <property type="entry name" value="DeoC_typeI"/>
</dbReference>
<dbReference type="NCBIfam" id="TIGR00126">
    <property type="entry name" value="deoC"/>
    <property type="match status" value="1"/>
</dbReference>
<dbReference type="PANTHER" id="PTHR10889">
    <property type="entry name" value="DEOXYRIBOSE-PHOSPHATE ALDOLASE"/>
    <property type="match status" value="1"/>
</dbReference>
<dbReference type="PANTHER" id="PTHR10889:SF1">
    <property type="entry name" value="DEOXYRIBOSE-PHOSPHATE ALDOLASE"/>
    <property type="match status" value="1"/>
</dbReference>
<dbReference type="Pfam" id="PF01791">
    <property type="entry name" value="DeoC"/>
    <property type="match status" value="1"/>
</dbReference>
<dbReference type="PIRSF" id="PIRSF001357">
    <property type="entry name" value="DeoC"/>
    <property type="match status" value="1"/>
</dbReference>
<dbReference type="SMART" id="SM01133">
    <property type="entry name" value="DeoC"/>
    <property type="match status" value="1"/>
</dbReference>
<dbReference type="SUPFAM" id="SSF51569">
    <property type="entry name" value="Aldolase"/>
    <property type="match status" value="1"/>
</dbReference>
<name>DEOC_BACC0</name>
<feature type="chain" id="PRO_1000117539" description="Deoxyribose-phosphate aldolase">
    <location>
        <begin position="1"/>
        <end position="223"/>
    </location>
</feature>
<feature type="active site" description="Proton donor/acceptor" evidence="1">
    <location>
        <position position="89"/>
    </location>
</feature>
<feature type="active site" description="Schiff-base intermediate with acetaldehyde" evidence="1">
    <location>
        <position position="152"/>
    </location>
</feature>
<feature type="active site" description="Proton donor/acceptor" evidence="1">
    <location>
        <position position="181"/>
    </location>
</feature>
<sequence>MNIAKLIDHTILKANTTKEDVMKVIEEAKEYKFASVCINPTWVKLAAEELAGHDVDVCTVIGFPLGASTTETKAFETKDAIAKGATEVDMVINVGALKDGDNELVEKDIYEVVQAAKGKALVKVIIETCLLTDEEKVRACELSVKAGADFVKTSTGFSTGGATAEDIALMRKTVGPNVGVKASGGVRTREDAEKMVAAGASRVGASASVAIVLNDAKGATDNY</sequence>
<organism>
    <name type="scientific">Bacillus cereus (strain AH820)</name>
    <dbReference type="NCBI Taxonomy" id="405535"/>
    <lineage>
        <taxon>Bacteria</taxon>
        <taxon>Bacillati</taxon>
        <taxon>Bacillota</taxon>
        <taxon>Bacilli</taxon>
        <taxon>Bacillales</taxon>
        <taxon>Bacillaceae</taxon>
        <taxon>Bacillus</taxon>
        <taxon>Bacillus cereus group</taxon>
    </lineage>
</organism>
<evidence type="ECO:0000255" key="1">
    <source>
        <dbReference type="HAMAP-Rule" id="MF_00114"/>
    </source>
</evidence>
<comment type="function">
    <text evidence="1">Catalyzes a reversible aldol reaction between acetaldehyde and D-glyceraldehyde 3-phosphate to generate 2-deoxy-D-ribose 5-phosphate.</text>
</comment>
<comment type="catalytic activity">
    <reaction evidence="1">
        <text>2-deoxy-D-ribose 5-phosphate = D-glyceraldehyde 3-phosphate + acetaldehyde</text>
        <dbReference type="Rhea" id="RHEA:12821"/>
        <dbReference type="ChEBI" id="CHEBI:15343"/>
        <dbReference type="ChEBI" id="CHEBI:59776"/>
        <dbReference type="ChEBI" id="CHEBI:62877"/>
        <dbReference type="EC" id="4.1.2.4"/>
    </reaction>
</comment>
<comment type="pathway">
    <text evidence="1">Carbohydrate degradation; 2-deoxy-D-ribose 1-phosphate degradation; D-glyceraldehyde 3-phosphate and acetaldehyde from 2-deoxy-alpha-D-ribose 1-phosphate: step 2/2.</text>
</comment>
<comment type="subcellular location">
    <subcellularLocation>
        <location evidence="1">Cytoplasm</location>
    </subcellularLocation>
</comment>
<comment type="similarity">
    <text evidence="1">Belongs to the DeoC/FbaB aldolase family. DeoC type 1 subfamily.</text>
</comment>
<reference key="1">
    <citation type="submission" date="2008-10" db="EMBL/GenBank/DDBJ databases">
        <title>Genome sequence of Bacillus cereus AH820.</title>
        <authorList>
            <person name="Dodson R.J."/>
            <person name="Durkin A.S."/>
            <person name="Rosovitz M.J."/>
            <person name="Rasko D.A."/>
            <person name="Hoffmaster A."/>
            <person name="Ravel J."/>
            <person name="Sutton G."/>
        </authorList>
    </citation>
    <scope>NUCLEOTIDE SEQUENCE [LARGE SCALE GENOMIC DNA]</scope>
    <source>
        <strain>AH820</strain>
    </source>
</reference>
<proteinExistence type="inferred from homology"/>
<accession>B7JJK4</accession>
<protein>
    <recommendedName>
        <fullName evidence="1">Deoxyribose-phosphate aldolase</fullName>
        <shortName evidence="1">DERA</shortName>
        <ecNumber evidence="1">4.1.2.4</ecNumber>
    </recommendedName>
    <alternativeName>
        <fullName evidence="1">2-deoxy-D-ribose 5-phosphate aldolase</fullName>
    </alternativeName>
    <alternativeName>
        <fullName evidence="1">Phosphodeoxyriboaldolase</fullName>
        <shortName evidence="1">Deoxyriboaldolase</shortName>
    </alternativeName>
</protein>